<proteinExistence type="inferred from homology"/>
<organism>
    <name type="scientific">Vibrio vulnificus (strain YJ016)</name>
    <dbReference type="NCBI Taxonomy" id="196600"/>
    <lineage>
        <taxon>Bacteria</taxon>
        <taxon>Pseudomonadati</taxon>
        <taxon>Pseudomonadota</taxon>
        <taxon>Gammaproteobacteria</taxon>
        <taxon>Vibrionales</taxon>
        <taxon>Vibrionaceae</taxon>
        <taxon>Vibrio</taxon>
    </lineage>
</organism>
<name>PUR5_VIBVY</name>
<dbReference type="EC" id="6.3.3.1" evidence="1"/>
<dbReference type="EMBL" id="BA000037">
    <property type="protein sequence ID" value="BAC95279.1"/>
    <property type="molecule type" value="Genomic_DNA"/>
</dbReference>
<dbReference type="RefSeq" id="WP_011079800.1">
    <property type="nucleotide sequence ID" value="NC_005139.1"/>
</dbReference>
<dbReference type="SMR" id="Q7MIK1"/>
<dbReference type="STRING" id="672.VV93_v1c22400"/>
<dbReference type="GeneID" id="93896123"/>
<dbReference type="KEGG" id="vvy:VV2515"/>
<dbReference type="PATRIC" id="fig|196600.6.peg.2521"/>
<dbReference type="eggNOG" id="COG0150">
    <property type="taxonomic scope" value="Bacteria"/>
</dbReference>
<dbReference type="HOGENOM" id="CLU_047116_0_0_6"/>
<dbReference type="UniPathway" id="UPA00074">
    <property type="reaction ID" value="UER00129"/>
</dbReference>
<dbReference type="Proteomes" id="UP000002675">
    <property type="component" value="Chromosome I"/>
</dbReference>
<dbReference type="GO" id="GO:0005829">
    <property type="term" value="C:cytosol"/>
    <property type="evidence" value="ECO:0007669"/>
    <property type="project" value="TreeGrafter"/>
</dbReference>
<dbReference type="GO" id="GO:0005524">
    <property type="term" value="F:ATP binding"/>
    <property type="evidence" value="ECO:0007669"/>
    <property type="project" value="UniProtKB-KW"/>
</dbReference>
<dbReference type="GO" id="GO:0004637">
    <property type="term" value="F:phosphoribosylamine-glycine ligase activity"/>
    <property type="evidence" value="ECO:0007669"/>
    <property type="project" value="TreeGrafter"/>
</dbReference>
<dbReference type="GO" id="GO:0004641">
    <property type="term" value="F:phosphoribosylformylglycinamidine cyclo-ligase activity"/>
    <property type="evidence" value="ECO:0007669"/>
    <property type="project" value="UniProtKB-UniRule"/>
</dbReference>
<dbReference type="GO" id="GO:0006189">
    <property type="term" value="P:'de novo' IMP biosynthetic process"/>
    <property type="evidence" value="ECO:0007669"/>
    <property type="project" value="UniProtKB-UniRule"/>
</dbReference>
<dbReference type="GO" id="GO:0046084">
    <property type="term" value="P:adenine biosynthetic process"/>
    <property type="evidence" value="ECO:0007669"/>
    <property type="project" value="TreeGrafter"/>
</dbReference>
<dbReference type="CDD" id="cd02196">
    <property type="entry name" value="PurM"/>
    <property type="match status" value="1"/>
</dbReference>
<dbReference type="FunFam" id="3.30.1330.10:FF:000001">
    <property type="entry name" value="Phosphoribosylformylglycinamidine cyclo-ligase"/>
    <property type="match status" value="1"/>
</dbReference>
<dbReference type="FunFam" id="3.90.650.10:FF:000001">
    <property type="entry name" value="Phosphoribosylformylglycinamidine cyclo-ligase"/>
    <property type="match status" value="1"/>
</dbReference>
<dbReference type="Gene3D" id="3.90.650.10">
    <property type="entry name" value="PurM-like C-terminal domain"/>
    <property type="match status" value="1"/>
</dbReference>
<dbReference type="Gene3D" id="3.30.1330.10">
    <property type="entry name" value="PurM-like, N-terminal domain"/>
    <property type="match status" value="1"/>
</dbReference>
<dbReference type="HAMAP" id="MF_00741">
    <property type="entry name" value="AIRS"/>
    <property type="match status" value="1"/>
</dbReference>
<dbReference type="InterPro" id="IPR010918">
    <property type="entry name" value="PurM-like_C_dom"/>
</dbReference>
<dbReference type="InterPro" id="IPR036676">
    <property type="entry name" value="PurM-like_C_sf"/>
</dbReference>
<dbReference type="InterPro" id="IPR016188">
    <property type="entry name" value="PurM-like_N"/>
</dbReference>
<dbReference type="InterPro" id="IPR036921">
    <property type="entry name" value="PurM-like_N_sf"/>
</dbReference>
<dbReference type="InterPro" id="IPR004733">
    <property type="entry name" value="PurM_cligase"/>
</dbReference>
<dbReference type="NCBIfam" id="TIGR00878">
    <property type="entry name" value="purM"/>
    <property type="match status" value="1"/>
</dbReference>
<dbReference type="PANTHER" id="PTHR10520:SF12">
    <property type="entry name" value="TRIFUNCTIONAL PURINE BIOSYNTHETIC PROTEIN ADENOSINE-3"/>
    <property type="match status" value="1"/>
</dbReference>
<dbReference type="PANTHER" id="PTHR10520">
    <property type="entry name" value="TRIFUNCTIONAL PURINE BIOSYNTHETIC PROTEIN ADENOSINE-3-RELATED"/>
    <property type="match status" value="1"/>
</dbReference>
<dbReference type="Pfam" id="PF00586">
    <property type="entry name" value="AIRS"/>
    <property type="match status" value="1"/>
</dbReference>
<dbReference type="Pfam" id="PF02769">
    <property type="entry name" value="AIRS_C"/>
    <property type="match status" value="1"/>
</dbReference>
<dbReference type="SUPFAM" id="SSF56042">
    <property type="entry name" value="PurM C-terminal domain-like"/>
    <property type="match status" value="1"/>
</dbReference>
<dbReference type="SUPFAM" id="SSF55326">
    <property type="entry name" value="PurM N-terminal domain-like"/>
    <property type="match status" value="1"/>
</dbReference>
<accession>Q7MIK1</accession>
<reference key="1">
    <citation type="journal article" date="2003" name="Genome Res.">
        <title>Comparative genome analysis of Vibrio vulnificus, a marine pathogen.</title>
        <authorList>
            <person name="Chen C.-Y."/>
            <person name="Wu K.-M."/>
            <person name="Chang Y.-C."/>
            <person name="Chang C.-H."/>
            <person name="Tsai H.-C."/>
            <person name="Liao T.-L."/>
            <person name="Liu Y.-M."/>
            <person name="Chen H.-J."/>
            <person name="Shen A.B.-T."/>
            <person name="Li J.-C."/>
            <person name="Su T.-L."/>
            <person name="Shao C.-P."/>
            <person name="Lee C.-T."/>
            <person name="Hor L.-I."/>
            <person name="Tsai S.-F."/>
        </authorList>
    </citation>
    <scope>NUCLEOTIDE SEQUENCE [LARGE SCALE GENOMIC DNA]</scope>
    <source>
        <strain>YJ016</strain>
    </source>
</reference>
<feature type="chain" id="PRO_0000148273" description="Phosphoribosylformylglycinamidine cyclo-ligase">
    <location>
        <begin position="1"/>
        <end position="346"/>
    </location>
</feature>
<keyword id="KW-0067">ATP-binding</keyword>
<keyword id="KW-0963">Cytoplasm</keyword>
<keyword id="KW-0436">Ligase</keyword>
<keyword id="KW-0547">Nucleotide-binding</keyword>
<keyword id="KW-0658">Purine biosynthesis</keyword>
<protein>
    <recommendedName>
        <fullName evidence="1">Phosphoribosylformylglycinamidine cyclo-ligase</fullName>
        <ecNumber evidence="1">6.3.3.1</ecNumber>
    </recommendedName>
    <alternativeName>
        <fullName evidence="1">AIR synthase</fullName>
    </alternativeName>
    <alternativeName>
        <fullName evidence="1">AIRS</fullName>
    </alternativeName>
    <alternativeName>
        <fullName evidence="1">Phosphoribosyl-aminoimidazole synthetase</fullName>
    </alternativeName>
</protein>
<gene>
    <name evidence="1" type="primary">purM</name>
    <name type="ordered locus">VV2515</name>
</gene>
<sequence>MSGNNSSLSYKDAGVDIDAGNALVERIKGSVKRTRRPEVMGGIGGFGALCELPTKYKQPVLVSGTDGVGTKLRLALDMNKHDTIGIDLVAMCVNDLIVQGAEPLFFLDYYATGKLDVDVAADVISGIAEGCIQAGCALIGGETAEMPGMYEGEDYDVAGFCVGVVEKEDIIDGTKVAVGDALIAVGSSGPHSNGYSLVRKILEVSGADKNEELAGRTIGEHLLEPTKIYIKSALKMIEQHDIHAISHITGGGFWENIPRVLPEGTKAVIDGKSWEWPVIFQWLQEKGNVATREMYRTFNCGVGLIVALPQDQAEAAVALLQQEGEKAWVIGAIAQAEAGEEQVEIN</sequence>
<evidence type="ECO:0000255" key="1">
    <source>
        <dbReference type="HAMAP-Rule" id="MF_00741"/>
    </source>
</evidence>
<comment type="catalytic activity">
    <reaction evidence="1">
        <text>2-formamido-N(1)-(5-O-phospho-beta-D-ribosyl)acetamidine + ATP = 5-amino-1-(5-phospho-beta-D-ribosyl)imidazole + ADP + phosphate + H(+)</text>
        <dbReference type="Rhea" id="RHEA:23032"/>
        <dbReference type="ChEBI" id="CHEBI:15378"/>
        <dbReference type="ChEBI" id="CHEBI:30616"/>
        <dbReference type="ChEBI" id="CHEBI:43474"/>
        <dbReference type="ChEBI" id="CHEBI:137981"/>
        <dbReference type="ChEBI" id="CHEBI:147287"/>
        <dbReference type="ChEBI" id="CHEBI:456216"/>
        <dbReference type="EC" id="6.3.3.1"/>
    </reaction>
</comment>
<comment type="pathway">
    <text evidence="1">Purine metabolism; IMP biosynthesis via de novo pathway; 5-amino-1-(5-phospho-D-ribosyl)imidazole from N(2)-formyl-N(1)-(5-phospho-D-ribosyl)glycinamide: step 2/2.</text>
</comment>
<comment type="subcellular location">
    <subcellularLocation>
        <location evidence="1">Cytoplasm</location>
    </subcellularLocation>
</comment>
<comment type="similarity">
    <text evidence="1">Belongs to the AIR synthase family.</text>
</comment>